<keyword id="KW-0072">Autophagy</keyword>
<keyword id="KW-0963">Cytoplasm</keyword>
<keyword id="KW-0967">Endosome</keyword>
<keyword id="KW-0446">Lipid-binding</keyword>
<keyword id="KW-0472">Membrane</keyword>
<keyword id="KW-0653">Protein transport</keyword>
<keyword id="KW-1185">Reference proteome</keyword>
<keyword id="KW-0813">Transport</keyword>
<protein>
    <recommendedName>
        <fullName>Autophagy-related protein 20</fullName>
    </recommendedName>
</protein>
<proteinExistence type="inferred from homology"/>
<accession>Q9USM8</accession>
<feature type="chain" id="PRO_0000314769" description="Autophagy-related protein 20">
    <location>
        <begin position="1"/>
        <end position="534"/>
    </location>
</feature>
<feature type="domain" description="PX" evidence="2">
    <location>
        <begin position="1"/>
        <end position="137"/>
    </location>
</feature>
<feature type="region of interest" description="Disordered" evidence="3">
    <location>
        <begin position="1"/>
        <end position="21"/>
    </location>
</feature>
<feature type="region of interest" description="Disordered" evidence="3">
    <location>
        <begin position="179"/>
        <end position="272"/>
    </location>
</feature>
<feature type="compositionally biased region" description="Low complexity" evidence="3">
    <location>
        <begin position="203"/>
        <end position="212"/>
    </location>
</feature>
<feature type="compositionally biased region" description="Polar residues" evidence="3">
    <location>
        <begin position="245"/>
        <end position="263"/>
    </location>
</feature>
<feature type="binding site" evidence="1">
    <location>
        <position position="55"/>
    </location>
    <ligand>
        <name>a 1,2-diacyl-sn-glycero-3-phospho-(1D-myo-inositol-3-phosphate)</name>
        <dbReference type="ChEBI" id="CHEBI:58088"/>
    </ligand>
</feature>
<feature type="binding site" evidence="1">
    <location>
        <position position="57"/>
    </location>
    <ligand>
        <name>a 1,2-diacyl-sn-glycero-3-phospho-(1D-myo-inositol-3-phosphate)</name>
        <dbReference type="ChEBI" id="CHEBI:58088"/>
    </ligand>
</feature>
<feature type="binding site" evidence="1">
    <location>
        <position position="81"/>
    </location>
    <ligand>
        <name>a 1,2-diacyl-sn-glycero-3-phospho-(1D-myo-inositol-3-phosphate)</name>
        <dbReference type="ChEBI" id="CHEBI:58088"/>
    </ligand>
</feature>
<feature type="binding site" evidence="1">
    <location>
        <position position="104"/>
    </location>
    <ligand>
        <name>a 1,2-diacyl-sn-glycero-3-phospho-(1D-myo-inositol-3-phosphate)</name>
        <dbReference type="ChEBI" id="CHEBI:58088"/>
    </ligand>
</feature>
<organism>
    <name type="scientific">Schizosaccharomyces pombe (strain 972 / ATCC 24843)</name>
    <name type="common">Fission yeast</name>
    <dbReference type="NCBI Taxonomy" id="284812"/>
    <lineage>
        <taxon>Eukaryota</taxon>
        <taxon>Fungi</taxon>
        <taxon>Dikarya</taxon>
        <taxon>Ascomycota</taxon>
        <taxon>Taphrinomycotina</taxon>
        <taxon>Schizosaccharomycetes</taxon>
        <taxon>Schizosaccharomycetales</taxon>
        <taxon>Schizosaccharomycetaceae</taxon>
        <taxon>Schizosaccharomyces</taxon>
    </lineage>
</organism>
<evidence type="ECO:0000250" key="1"/>
<evidence type="ECO:0000255" key="2">
    <source>
        <dbReference type="PROSITE-ProRule" id="PRU00147"/>
    </source>
</evidence>
<evidence type="ECO:0000256" key="3">
    <source>
        <dbReference type="SAM" id="MobiDB-lite"/>
    </source>
</evidence>
<evidence type="ECO:0000269" key="4">
    <source>
    </source>
</evidence>
<evidence type="ECO:0000305" key="5"/>
<sequence>MAQDDSYEEKPEVISSDSGGSGYSTEIQIVGTVTSSDGSYVEYEIVHQKRSVWRRYSDFESLVKLMRRQYPAAIVPPIPGKQSLLSYAKHPRKAKSDAEFLNFRSRMLELFLRQCLLHPCIRSNPIFDKFIHSTVSWHVTLSSLDLPKDSNTDPLRLPPIATEHDPFAHLRSSMPLVMANSLSPPSSRALKPIHSLSNPSTASSLEPSSPLGSEDECHPPTSDMQPTHELNESPSTPTAPDFPHYNSSPSELSPTQRRSSISNGKDAPSPVLKDLTSYTQEVIVCRKFLHHSLSPSIHSTLSSISKMESCLSKLGSAFHSLTALNEIQLANHLQVIANAFEFSGMYAKEFEQEFNSSVYEKMVQSMQLAKCAADALKYKQLKIQQRDFLQDQLIHSNTMSATDSMVAASPTIHPATRLNTIQRAVVSQAKKGYTIFGRLQNVLHDFVEGETSISKESLQQHKNTIENQLAAANWDCQKIDEFMDAELKFYKECQTSQWEEIIKSVHECIYKWAQTNLQRWLRTREELENLSKDI</sequence>
<reference key="1">
    <citation type="journal article" date="2002" name="Nature">
        <title>The genome sequence of Schizosaccharomyces pombe.</title>
        <authorList>
            <person name="Wood V."/>
            <person name="Gwilliam R."/>
            <person name="Rajandream M.A."/>
            <person name="Lyne M.H."/>
            <person name="Lyne R."/>
            <person name="Stewart A."/>
            <person name="Sgouros J.G."/>
            <person name="Peat N."/>
            <person name="Hayles J."/>
            <person name="Baker S.G."/>
            <person name="Basham D."/>
            <person name="Bowman S."/>
            <person name="Brooks K."/>
            <person name="Brown D."/>
            <person name="Brown S."/>
            <person name="Chillingworth T."/>
            <person name="Churcher C.M."/>
            <person name="Collins M."/>
            <person name="Connor R."/>
            <person name="Cronin A."/>
            <person name="Davis P."/>
            <person name="Feltwell T."/>
            <person name="Fraser A."/>
            <person name="Gentles S."/>
            <person name="Goble A."/>
            <person name="Hamlin N."/>
            <person name="Harris D.E."/>
            <person name="Hidalgo J."/>
            <person name="Hodgson G."/>
            <person name="Holroyd S."/>
            <person name="Hornsby T."/>
            <person name="Howarth S."/>
            <person name="Huckle E.J."/>
            <person name="Hunt S."/>
            <person name="Jagels K."/>
            <person name="James K.D."/>
            <person name="Jones L."/>
            <person name="Jones M."/>
            <person name="Leather S."/>
            <person name="McDonald S."/>
            <person name="McLean J."/>
            <person name="Mooney P."/>
            <person name="Moule S."/>
            <person name="Mungall K.L."/>
            <person name="Murphy L.D."/>
            <person name="Niblett D."/>
            <person name="Odell C."/>
            <person name="Oliver K."/>
            <person name="O'Neil S."/>
            <person name="Pearson D."/>
            <person name="Quail M.A."/>
            <person name="Rabbinowitsch E."/>
            <person name="Rutherford K.M."/>
            <person name="Rutter S."/>
            <person name="Saunders D."/>
            <person name="Seeger K."/>
            <person name="Sharp S."/>
            <person name="Skelton J."/>
            <person name="Simmonds M.N."/>
            <person name="Squares R."/>
            <person name="Squares S."/>
            <person name="Stevens K."/>
            <person name="Taylor K."/>
            <person name="Taylor R.G."/>
            <person name="Tivey A."/>
            <person name="Walsh S.V."/>
            <person name="Warren T."/>
            <person name="Whitehead S."/>
            <person name="Woodward J.R."/>
            <person name="Volckaert G."/>
            <person name="Aert R."/>
            <person name="Robben J."/>
            <person name="Grymonprez B."/>
            <person name="Weltjens I."/>
            <person name="Vanstreels E."/>
            <person name="Rieger M."/>
            <person name="Schaefer M."/>
            <person name="Mueller-Auer S."/>
            <person name="Gabel C."/>
            <person name="Fuchs M."/>
            <person name="Duesterhoeft A."/>
            <person name="Fritzc C."/>
            <person name="Holzer E."/>
            <person name="Moestl D."/>
            <person name="Hilbert H."/>
            <person name="Borzym K."/>
            <person name="Langer I."/>
            <person name="Beck A."/>
            <person name="Lehrach H."/>
            <person name="Reinhardt R."/>
            <person name="Pohl T.M."/>
            <person name="Eger P."/>
            <person name="Zimmermann W."/>
            <person name="Wedler H."/>
            <person name="Wambutt R."/>
            <person name="Purnelle B."/>
            <person name="Goffeau A."/>
            <person name="Cadieu E."/>
            <person name="Dreano S."/>
            <person name="Gloux S."/>
            <person name="Lelaure V."/>
            <person name="Mottier S."/>
            <person name="Galibert F."/>
            <person name="Aves S.J."/>
            <person name="Xiang Z."/>
            <person name="Hunt C."/>
            <person name="Moore K."/>
            <person name="Hurst S.M."/>
            <person name="Lucas M."/>
            <person name="Rochet M."/>
            <person name="Gaillardin C."/>
            <person name="Tallada V.A."/>
            <person name="Garzon A."/>
            <person name="Thode G."/>
            <person name="Daga R.R."/>
            <person name="Cruzado L."/>
            <person name="Jimenez J."/>
            <person name="Sanchez M."/>
            <person name="del Rey F."/>
            <person name="Benito J."/>
            <person name="Dominguez A."/>
            <person name="Revuelta J.L."/>
            <person name="Moreno S."/>
            <person name="Armstrong J."/>
            <person name="Forsburg S.L."/>
            <person name="Cerutti L."/>
            <person name="Lowe T."/>
            <person name="McCombie W.R."/>
            <person name="Paulsen I."/>
            <person name="Potashkin J."/>
            <person name="Shpakovski G.V."/>
            <person name="Ussery D."/>
            <person name="Barrell B.G."/>
            <person name="Nurse P."/>
        </authorList>
    </citation>
    <scope>NUCLEOTIDE SEQUENCE [LARGE SCALE GENOMIC DNA]</scope>
    <source>
        <strain>972 / ATCC 24843</strain>
    </source>
</reference>
<reference key="2">
    <citation type="journal article" date="2006" name="Nat. Biotechnol.">
        <title>ORFeome cloning and global analysis of protein localization in the fission yeast Schizosaccharomyces pombe.</title>
        <authorList>
            <person name="Matsuyama A."/>
            <person name="Arai R."/>
            <person name="Yashiroda Y."/>
            <person name="Shirai A."/>
            <person name="Kamata A."/>
            <person name="Sekido S."/>
            <person name="Kobayashi Y."/>
            <person name="Hashimoto A."/>
            <person name="Hamamoto M."/>
            <person name="Hiraoka Y."/>
            <person name="Horinouchi S."/>
            <person name="Yoshida M."/>
        </authorList>
    </citation>
    <scope>SUBCELLULAR LOCATION [LARGE SCALE ANALYSIS]</scope>
</reference>
<name>ATG20_SCHPO</name>
<dbReference type="EMBL" id="CU329672">
    <property type="protein sequence ID" value="CAB53080.1"/>
    <property type="molecule type" value="Genomic_DNA"/>
</dbReference>
<dbReference type="PIR" id="T41081">
    <property type="entry name" value="T41081"/>
</dbReference>
<dbReference type="RefSeq" id="NP_587995.1">
    <property type="nucleotide sequence ID" value="NM_001022986.2"/>
</dbReference>
<dbReference type="BioGRID" id="275883">
    <property type="interactions" value="27"/>
</dbReference>
<dbReference type="STRING" id="284812.Q9USM8"/>
<dbReference type="iPTMnet" id="Q9USM8"/>
<dbReference type="PaxDb" id="4896-SPCC16A11.08.1"/>
<dbReference type="EnsemblFungi" id="SPCC16A11.08.1">
    <property type="protein sequence ID" value="SPCC16A11.08.1:pep"/>
    <property type="gene ID" value="SPCC16A11.08"/>
</dbReference>
<dbReference type="GeneID" id="2539317"/>
<dbReference type="KEGG" id="spo:2539317"/>
<dbReference type="PomBase" id="SPCC16A11.08">
    <property type="gene designation" value="atg20"/>
</dbReference>
<dbReference type="VEuPathDB" id="FungiDB:SPCC16A11.08"/>
<dbReference type="eggNOG" id="KOG2273">
    <property type="taxonomic scope" value="Eukaryota"/>
</dbReference>
<dbReference type="HOGENOM" id="CLU_504485_0_0_1"/>
<dbReference type="InParanoid" id="Q9USM8"/>
<dbReference type="OMA" id="FEFSGMY"/>
<dbReference type="PhylomeDB" id="Q9USM8"/>
<dbReference type="PRO" id="PR:Q9USM8"/>
<dbReference type="Proteomes" id="UP000002485">
    <property type="component" value="Chromosome III"/>
</dbReference>
<dbReference type="GO" id="GO:0005737">
    <property type="term" value="C:cytoplasm"/>
    <property type="evidence" value="ECO:0007005"/>
    <property type="project" value="PomBase"/>
</dbReference>
<dbReference type="GO" id="GO:0005829">
    <property type="term" value="C:cytosol"/>
    <property type="evidence" value="ECO:0007669"/>
    <property type="project" value="GOC"/>
</dbReference>
<dbReference type="GO" id="GO:0005768">
    <property type="term" value="C:endosome"/>
    <property type="evidence" value="ECO:0000266"/>
    <property type="project" value="PomBase"/>
</dbReference>
<dbReference type="GO" id="GO:0010008">
    <property type="term" value="C:endosome membrane"/>
    <property type="evidence" value="ECO:0007669"/>
    <property type="project" value="UniProtKB-SubCell"/>
</dbReference>
<dbReference type="GO" id="GO:0000407">
    <property type="term" value="C:phagophore assembly site"/>
    <property type="evidence" value="ECO:0000314"/>
    <property type="project" value="PomBase"/>
</dbReference>
<dbReference type="GO" id="GO:0034045">
    <property type="term" value="C:phagophore assembly site membrane"/>
    <property type="evidence" value="ECO:0007669"/>
    <property type="project" value="UniProtKB-SubCell"/>
</dbReference>
<dbReference type="GO" id="GO:0032266">
    <property type="term" value="F:phosphatidylinositol-3-phosphate binding"/>
    <property type="evidence" value="ECO:0000318"/>
    <property type="project" value="GO_Central"/>
</dbReference>
<dbReference type="GO" id="GO:0000422">
    <property type="term" value="P:autophagy of mitochondrion"/>
    <property type="evidence" value="ECO:0000318"/>
    <property type="project" value="GO_Central"/>
</dbReference>
<dbReference type="GO" id="GO:0034498">
    <property type="term" value="P:early endosome to Golgi transport"/>
    <property type="evidence" value="ECO:0000266"/>
    <property type="project" value="PomBase"/>
</dbReference>
<dbReference type="GO" id="GO:0000423">
    <property type="term" value="P:mitophagy"/>
    <property type="evidence" value="ECO:0000315"/>
    <property type="project" value="PomBase"/>
</dbReference>
<dbReference type="GO" id="GO:0015031">
    <property type="term" value="P:protein transport"/>
    <property type="evidence" value="ECO:0007669"/>
    <property type="project" value="UniProtKB-KW"/>
</dbReference>
<dbReference type="GO" id="GO:0061709">
    <property type="term" value="P:reticulophagy"/>
    <property type="evidence" value="ECO:0000315"/>
    <property type="project" value="PomBase"/>
</dbReference>
<dbReference type="CDD" id="cd06867">
    <property type="entry name" value="PX_SNX41_42"/>
    <property type="match status" value="1"/>
</dbReference>
<dbReference type="Gene3D" id="3.30.1520.10">
    <property type="entry name" value="Phox-like domain"/>
    <property type="match status" value="1"/>
</dbReference>
<dbReference type="InterPro" id="IPR001683">
    <property type="entry name" value="PX_dom"/>
</dbReference>
<dbReference type="InterPro" id="IPR036871">
    <property type="entry name" value="PX_dom_sf"/>
</dbReference>
<dbReference type="InterPro" id="IPR044106">
    <property type="entry name" value="PX_Snx41/Atg20"/>
</dbReference>
<dbReference type="InterPro" id="IPR051079">
    <property type="entry name" value="Sorting_Nexin_Autophagy"/>
</dbReference>
<dbReference type="PANTHER" id="PTHR46979:SF3">
    <property type="entry name" value="AUTOPHAGY-RELATED PROTEIN 20"/>
    <property type="match status" value="1"/>
</dbReference>
<dbReference type="PANTHER" id="PTHR46979">
    <property type="entry name" value="SORTING NEXIN-41"/>
    <property type="match status" value="1"/>
</dbReference>
<dbReference type="Pfam" id="PF00787">
    <property type="entry name" value="PX"/>
    <property type="match status" value="1"/>
</dbReference>
<dbReference type="SMART" id="SM00312">
    <property type="entry name" value="PX"/>
    <property type="match status" value="1"/>
</dbReference>
<dbReference type="SUPFAM" id="SSF64268">
    <property type="entry name" value="PX domain"/>
    <property type="match status" value="1"/>
</dbReference>
<dbReference type="PROSITE" id="PS50195">
    <property type="entry name" value="PX"/>
    <property type="match status" value="1"/>
</dbReference>
<gene>
    <name type="primary">atg20</name>
    <name type="ORF">SPCC16A11.08</name>
</gene>
<comment type="function">
    <text evidence="1">Required for cytoplasm to vacuole transport (Cvt), pexophagy and mitophagy. Also involved in endoplasmic reticulum-specific autophagic process and is essential for the survival of cells subjected to severe ER stress. Functions in protein retrieval from the endocytic pathway (By similarity).</text>
</comment>
<comment type="subcellular location">
    <subcellularLocation>
        <location evidence="4">Cytoplasm</location>
    </subcellularLocation>
    <subcellularLocation>
        <location evidence="1">Endosome membrane</location>
        <topology evidence="1">Peripheral membrane protein</topology>
    </subcellularLocation>
    <subcellularLocation>
        <location evidence="1">Preautophagosomal structure membrane</location>
        <topology evidence="1">Peripheral membrane protein</topology>
    </subcellularLocation>
</comment>
<comment type="domain">
    <text>The PX domain binds phosphatidylinositol 3-phosphate which is necessary for peripheral membrane localization of ATG20 to the perivacuolar punctate structures.</text>
</comment>
<comment type="similarity">
    <text evidence="5">Belongs to the sorting nexin family.</text>
</comment>